<evidence type="ECO:0000255" key="1">
    <source>
        <dbReference type="HAMAP-Rule" id="MF_00236"/>
    </source>
</evidence>
<evidence type="ECO:0000256" key="2">
    <source>
        <dbReference type="SAM" id="MobiDB-lite"/>
    </source>
</evidence>
<feature type="chain" id="PRO_0000097946" description="Sec-independent protein translocase protein TatA">
    <location>
        <begin position="1"/>
        <end position="83"/>
    </location>
</feature>
<feature type="transmembrane region" description="Helical" evidence="1">
    <location>
        <begin position="1"/>
        <end position="21"/>
    </location>
</feature>
<feature type="region of interest" description="Disordered" evidence="2">
    <location>
        <begin position="48"/>
        <end position="83"/>
    </location>
</feature>
<feature type="compositionally biased region" description="Polar residues" evidence="2">
    <location>
        <begin position="57"/>
        <end position="77"/>
    </location>
</feature>
<protein>
    <recommendedName>
        <fullName evidence="1">Sec-independent protein translocase protein TatA</fullName>
    </recommendedName>
</protein>
<organism>
    <name type="scientific">Mycobacterium bovis (strain ATCC BAA-935 / AF2122/97)</name>
    <dbReference type="NCBI Taxonomy" id="233413"/>
    <lineage>
        <taxon>Bacteria</taxon>
        <taxon>Bacillati</taxon>
        <taxon>Actinomycetota</taxon>
        <taxon>Actinomycetes</taxon>
        <taxon>Mycobacteriales</taxon>
        <taxon>Mycobacteriaceae</taxon>
        <taxon>Mycobacterium</taxon>
        <taxon>Mycobacterium tuberculosis complex</taxon>
    </lineage>
</organism>
<comment type="function">
    <text evidence="1">Part of the twin-arginine translocation (Tat) system that transports large folded proteins containing a characteristic twin-arginine motif in their signal peptide across membranes. TatA could form the protein-conducting channel of the Tat system.</text>
</comment>
<comment type="subunit">
    <text evidence="1">The Tat system comprises two distinct complexes: a TatABC complex, containing multiple copies of TatA, TatB and TatC subunits, and a separate TatA complex, containing only TatA subunits. Substrates initially bind to the TatABC complex, which probably triggers association of the separate TatA complex to form the active translocon.</text>
</comment>
<comment type="subcellular location">
    <subcellularLocation>
        <location evidence="1">Cell membrane</location>
        <topology evidence="1">Single-pass membrane protein</topology>
    </subcellularLocation>
</comment>
<comment type="similarity">
    <text evidence="1">Belongs to the TatA/E family.</text>
</comment>
<keyword id="KW-1003">Cell membrane</keyword>
<keyword id="KW-0472">Membrane</keyword>
<keyword id="KW-0653">Protein transport</keyword>
<keyword id="KW-1185">Reference proteome</keyword>
<keyword id="KW-0811">Translocation</keyword>
<keyword id="KW-0812">Transmembrane</keyword>
<keyword id="KW-1133">Transmembrane helix</keyword>
<keyword id="KW-0813">Transport</keyword>
<dbReference type="EMBL" id="LT708304">
    <property type="protein sequence ID" value="SIU00728.1"/>
    <property type="molecule type" value="Genomic_DNA"/>
</dbReference>
<dbReference type="RefSeq" id="NP_855770.1">
    <property type="nucleotide sequence ID" value="NC_002945.3"/>
</dbReference>
<dbReference type="RefSeq" id="WP_003410768.1">
    <property type="nucleotide sequence ID" value="NC_002945.4"/>
</dbReference>
<dbReference type="SMR" id="P66890"/>
<dbReference type="GeneID" id="45426071"/>
<dbReference type="KEGG" id="mbo:BQ2027_MB2121C"/>
<dbReference type="PATRIC" id="fig|233413.5.peg.2332"/>
<dbReference type="Proteomes" id="UP000001419">
    <property type="component" value="Chromosome"/>
</dbReference>
<dbReference type="GO" id="GO:0033281">
    <property type="term" value="C:TAT protein transport complex"/>
    <property type="evidence" value="ECO:0007669"/>
    <property type="project" value="UniProtKB-UniRule"/>
</dbReference>
<dbReference type="GO" id="GO:0008320">
    <property type="term" value="F:protein transmembrane transporter activity"/>
    <property type="evidence" value="ECO:0007669"/>
    <property type="project" value="UniProtKB-UniRule"/>
</dbReference>
<dbReference type="GO" id="GO:0043953">
    <property type="term" value="P:protein transport by the Tat complex"/>
    <property type="evidence" value="ECO:0007669"/>
    <property type="project" value="UniProtKB-UniRule"/>
</dbReference>
<dbReference type="Gene3D" id="1.20.5.3310">
    <property type="match status" value="1"/>
</dbReference>
<dbReference type="HAMAP" id="MF_00236">
    <property type="entry name" value="TatA_E"/>
    <property type="match status" value="1"/>
</dbReference>
<dbReference type="InterPro" id="IPR003369">
    <property type="entry name" value="TatA/B/E"/>
</dbReference>
<dbReference type="InterPro" id="IPR006312">
    <property type="entry name" value="TatA/E"/>
</dbReference>
<dbReference type="NCBIfam" id="NF001854">
    <property type="entry name" value="PRK00575.1"/>
    <property type="match status" value="1"/>
</dbReference>
<dbReference type="NCBIfam" id="TIGR01411">
    <property type="entry name" value="tatAE"/>
    <property type="match status" value="1"/>
</dbReference>
<dbReference type="PANTHER" id="PTHR42982">
    <property type="entry name" value="SEC-INDEPENDENT PROTEIN TRANSLOCASE PROTEIN TATA"/>
    <property type="match status" value="1"/>
</dbReference>
<dbReference type="PANTHER" id="PTHR42982:SF8">
    <property type="entry name" value="SEC-INDEPENDENT PROTEIN TRANSLOCASE PROTEIN TATA"/>
    <property type="match status" value="1"/>
</dbReference>
<dbReference type="Pfam" id="PF02416">
    <property type="entry name" value="TatA_B_E"/>
    <property type="match status" value="1"/>
</dbReference>
<reference key="1">
    <citation type="journal article" date="2003" name="Proc. Natl. Acad. Sci. U.S.A.">
        <title>The complete genome sequence of Mycobacterium bovis.</title>
        <authorList>
            <person name="Garnier T."/>
            <person name="Eiglmeier K."/>
            <person name="Camus J.-C."/>
            <person name="Medina N."/>
            <person name="Mansoor H."/>
            <person name="Pryor M."/>
            <person name="Duthoy S."/>
            <person name="Grondin S."/>
            <person name="Lacroix C."/>
            <person name="Monsempe C."/>
            <person name="Simon S."/>
            <person name="Harris B."/>
            <person name="Atkin R."/>
            <person name="Doggett J."/>
            <person name="Mayes R."/>
            <person name="Keating L."/>
            <person name="Wheeler P.R."/>
            <person name="Parkhill J."/>
            <person name="Barrell B.G."/>
            <person name="Cole S.T."/>
            <person name="Gordon S.V."/>
            <person name="Hewinson R.G."/>
        </authorList>
    </citation>
    <scope>NUCLEOTIDE SEQUENCE [LARGE SCALE GENOMIC DNA]</scope>
    <source>
        <strain>ATCC BAA-935 / AF2122/97</strain>
    </source>
</reference>
<reference key="2">
    <citation type="journal article" date="2017" name="Genome Announc.">
        <title>Updated reference genome sequence and annotation of Mycobacterium bovis AF2122/97.</title>
        <authorList>
            <person name="Malone K.M."/>
            <person name="Farrell D."/>
            <person name="Stuber T.P."/>
            <person name="Schubert O.T."/>
            <person name="Aebersold R."/>
            <person name="Robbe-Austerman S."/>
            <person name="Gordon S.V."/>
        </authorList>
    </citation>
    <scope>NUCLEOTIDE SEQUENCE [LARGE SCALE GENOMIC DNA]</scope>
    <scope>GENOME REANNOTATION</scope>
    <source>
        <strain>ATCC BAA-935 / AF2122/97</strain>
    </source>
</reference>
<sequence length="83" mass="8941">MGSLSPWHWAILAVVVIVLFGAKKLPDAARSLGKSLRIFKSEVRELQNENKAEASIETPTPVQSQRVDPSAASGQDSTEARPA</sequence>
<accession>P66890</accession>
<accession>A0A1R3Y054</accession>
<accession>Q10703</accession>
<accession>X2BJP6</accession>
<name>TATA_MYCBO</name>
<proteinExistence type="inferred from homology"/>
<gene>
    <name evidence="1" type="primary">tatA</name>
    <name type="ordered locus">BQ2027_MB2121C</name>
</gene>